<keyword id="KW-0028">Amino-acid biosynthesis</keyword>
<keyword id="KW-0057">Aromatic amino acid biosynthesis</keyword>
<keyword id="KW-0067">ATP-binding</keyword>
<keyword id="KW-0963">Cytoplasm</keyword>
<keyword id="KW-0418">Kinase</keyword>
<keyword id="KW-0460">Magnesium</keyword>
<keyword id="KW-0479">Metal-binding</keyword>
<keyword id="KW-0547">Nucleotide-binding</keyword>
<keyword id="KW-1185">Reference proteome</keyword>
<keyword id="KW-0808">Transferase</keyword>
<gene>
    <name evidence="2" type="primary">aroK</name>
    <name type="ordered locus">Z4743</name>
    <name type="ordered locus">ECs4232</name>
</gene>
<evidence type="ECO:0000250" key="1"/>
<evidence type="ECO:0000255" key="2">
    <source>
        <dbReference type="HAMAP-Rule" id="MF_00109"/>
    </source>
</evidence>
<evidence type="ECO:0000305" key="3"/>
<sequence length="173" mass="19538">MAEKRNIFLVGPMGAGKSTIGRQLAQQLNMEFYDSDQEIEKRTGADVGWVFDLEGEEGFRDREEKVINELTEKQGIVLATGGGSVKSRETRNRLSARGVVVYLETTIEKQLARTQRDKKRPLLHVETPPREVLEALANERNPLYEEIADVTIRTDDQSAKVVANQIIHMLESN</sequence>
<name>AROK_ECO57</name>
<accession>P0A6D9</accession>
<accession>P24167</accession>
<accession>P78113</accession>
<accession>Q8X4S0</accession>
<protein>
    <recommendedName>
        <fullName evidence="2">Shikimate kinase 1</fullName>
        <shortName evidence="2">SK 1</shortName>
        <ecNumber evidence="2">2.7.1.71</ecNumber>
    </recommendedName>
</protein>
<reference key="1">
    <citation type="journal article" date="2001" name="Nature">
        <title>Genome sequence of enterohaemorrhagic Escherichia coli O157:H7.</title>
        <authorList>
            <person name="Perna N.T."/>
            <person name="Plunkett G. III"/>
            <person name="Burland V."/>
            <person name="Mau B."/>
            <person name="Glasner J.D."/>
            <person name="Rose D.J."/>
            <person name="Mayhew G.F."/>
            <person name="Evans P.S."/>
            <person name="Gregor J."/>
            <person name="Kirkpatrick H.A."/>
            <person name="Posfai G."/>
            <person name="Hackett J."/>
            <person name="Klink S."/>
            <person name="Boutin A."/>
            <person name="Shao Y."/>
            <person name="Miller L."/>
            <person name="Grotbeck E.J."/>
            <person name="Davis N.W."/>
            <person name="Lim A."/>
            <person name="Dimalanta E.T."/>
            <person name="Potamousis K."/>
            <person name="Apodaca J."/>
            <person name="Anantharaman T.S."/>
            <person name="Lin J."/>
            <person name="Yen G."/>
            <person name="Schwartz D.C."/>
            <person name="Welch R.A."/>
            <person name="Blattner F.R."/>
        </authorList>
    </citation>
    <scope>NUCLEOTIDE SEQUENCE [LARGE SCALE GENOMIC DNA]</scope>
    <source>
        <strain>O157:H7 / EDL933 / ATCC 700927 / EHEC</strain>
    </source>
</reference>
<reference key="2">
    <citation type="journal article" date="2001" name="DNA Res.">
        <title>Complete genome sequence of enterohemorrhagic Escherichia coli O157:H7 and genomic comparison with a laboratory strain K-12.</title>
        <authorList>
            <person name="Hayashi T."/>
            <person name="Makino K."/>
            <person name="Ohnishi M."/>
            <person name="Kurokawa K."/>
            <person name="Ishii K."/>
            <person name="Yokoyama K."/>
            <person name="Han C.-G."/>
            <person name="Ohtsubo E."/>
            <person name="Nakayama K."/>
            <person name="Murata T."/>
            <person name="Tanaka M."/>
            <person name="Tobe T."/>
            <person name="Iida T."/>
            <person name="Takami H."/>
            <person name="Honda T."/>
            <person name="Sasakawa C."/>
            <person name="Ogasawara N."/>
            <person name="Yasunaga T."/>
            <person name="Kuhara S."/>
            <person name="Shiba T."/>
            <person name="Hattori M."/>
            <person name="Shinagawa H."/>
        </authorList>
    </citation>
    <scope>NUCLEOTIDE SEQUENCE [LARGE SCALE GENOMIC DNA]</scope>
    <source>
        <strain>O157:H7 / Sakai / RIMD 0509952 / EHEC</strain>
    </source>
</reference>
<dbReference type="EC" id="2.7.1.71" evidence="2"/>
<dbReference type="EMBL" id="AE005174">
    <property type="protein sequence ID" value="AAG58490.1"/>
    <property type="status" value="ALT_INIT"/>
    <property type="molecule type" value="Genomic_DNA"/>
</dbReference>
<dbReference type="EMBL" id="BA000007">
    <property type="protein sequence ID" value="BAB37655.1"/>
    <property type="status" value="ALT_INIT"/>
    <property type="molecule type" value="Genomic_DNA"/>
</dbReference>
<dbReference type="RefSeq" id="NP_312259.2">
    <property type="nucleotide sequence ID" value="NC_002695.1"/>
</dbReference>
<dbReference type="RefSeq" id="WP_000818618.1">
    <property type="nucleotide sequence ID" value="NZ_VOAI01000004.1"/>
</dbReference>
<dbReference type="SMR" id="P0A6D9"/>
<dbReference type="STRING" id="155864.Z4743"/>
<dbReference type="GeneID" id="915912"/>
<dbReference type="GeneID" id="93778608"/>
<dbReference type="KEGG" id="ece:Z4743"/>
<dbReference type="KEGG" id="ecs:ECs_4232"/>
<dbReference type="PATRIC" id="fig|386585.9.peg.4418"/>
<dbReference type="eggNOG" id="COG0703">
    <property type="taxonomic scope" value="Bacteria"/>
</dbReference>
<dbReference type="HOGENOM" id="CLU_057607_2_2_6"/>
<dbReference type="OMA" id="FMGCGKS"/>
<dbReference type="UniPathway" id="UPA00053">
    <property type="reaction ID" value="UER00088"/>
</dbReference>
<dbReference type="Proteomes" id="UP000000558">
    <property type="component" value="Chromosome"/>
</dbReference>
<dbReference type="Proteomes" id="UP000002519">
    <property type="component" value="Chromosome"/>
</dbReference>
<dbReference type="GO" id="GO:0005829">
    <property type="term" value="C:cytosol"/>
    <property type="evidence" value="ECO:0007669"/>
    <property type="project" value="TreeGrafter"/>
</dbReference>
<dbReference type="GO" id="GO:0005524">
    <property type="term" value="F:ATP binding"/>
    <property type="evidence" value="ECO:0007669"/>
    <property type="project" value="UniProtKB-UniRule"/>
</dbReference>
<dbReference type="GO" id="GO:0000287">
    <property type="term" value="F:magnesium ion binding"/>
    <property type="evidence" value="ECO:0007669"/>
    <property type="project" value="UniProtKB-UniRule"/>
</dbReference>
<dbReference type="GO" id="GO:0004765">
    <property type="term" value="F:shikimate kinase activity"/>
    <property type="evidence" value="ECO:0007669"/>
    <property type="project" value="UniProtKB-UniRule"/>
</dbReference>
<dbReference type="GO" id="GO:0008652">
    <property type="term" value="P:amino acid biosynthetic process"/>
    <property type="evidence" value="ECO:0007669"/>
    <property type="project" value="UniProtKB-KW"/>
</dbReference>
<dbReference type="GO" id="GO:0009073">
    <property type="term" value="P:aromatic amino acid family biosynthetic process"/>
    <property type="evidence" value="ECO:0007669"/>
    <property type="project" value="UniProtKB-KW"/>
</dbReference>
<dbReference type="GO" id="GO:0009423">
    <property type="term" value="P:chorismate biosynthetic process"/>
    <property type="evidence" value="ECO:0007669"/>
    <property type="project" value="UniProtKB-UniRule"/>
</dbReference>
<dbReference type="CDD" id="cd00464">
    <property type="entry name" value="SK"/>
    <property type="match status" value="1"/>
</dbReference>
<dbReference type="FunFam" id="3.40.50.300:FF:000099">
    <property type="entry name" value="Shikimate kinase 1"/>
    <property type="match status" value="1"/>
</dbReference>
<dbReference type="Gene3D" id="3.40.50.300">
    <property type="entry name" value="P-loop containing nucleotide triphosphate hydrolases"/>
    <property type="match status" value="1"/>
</dbReference>
<dbReference type="HAMAP" id="MF_00109">
    <property type="entry name" value="Shikimate_kinase"/>
    <property type="match status" value="1"/>
</dbReference>
<dbReference type="InterPro" id="IPR027417">
    <property type="entry name" value="P-loop_NTPase"/>
</dbReference>
<dbReference type="InterPro" id="IPR031322">
    <property type="entry name" value="Shikimate/glucono_kinase"/>
</dbReference>
<dbReference type="InterPro" id="IPR000623">
    <property type="entry name" value="Shikimate_kinase/TSH1"/>
</dbReference>
<dbReference type="InterPro" id="IPR023000">
    <property type="entry name" value="Shikimate_kinase_CS"/>
</dbReference>
<dbReference type="NCBIfam" id="NF003456">
    <property type="entry name" value="PRK05057.1"/>
    <property type="match status" value="1"/>
</dbReference>
<dbReference type="PANTHER" id="PTHR21087">
    <property type="entry name" value="SHIKIMATE KINASE"/>
    <property type="match status" value="1"/>
</dbReference>
<dbReference type="PANTHER" id="PTHR21087:SF16">
    <property type="entry name" value="SHIKIMATE KINASE 1, CHLOROPLASTIC"/>
    <property type="match status" value="1"/>
</dbReference>
<dbReference type="Pfam" id="PF01202">
    <property type="entry name" value="SKI"/>
    <property type="match status" value="1"/>
</dbReference>
<dbReference type="PRINTS" id="PR01100">
    <property type="entry name" value="SHIKIMTKNASE"/>
</dbReference>
<dbReference type="SUPFAM" id="SSF52540">
    <property type="entry name" value="P-loop containing nucleoside triphosphate hydrolases"/>
    <property type="match status" value="1"/>
</dbReference>
<dbReference type="PROSITE" id="PS01128">
    <property type="entry name" value="SHIKIMATE_KINASE"/>
    <property type="match status" value="1"/>
</dbReference>
<proteinExistence type="inferred from homology"/>
<organism>
    <name type="scientific">Escherichia coli O157:H7</name>
    <dbReference type="NCBI Taxonomy" id="83334"/>
    <lineage>
        <taxon>Bacteria</taxon>
        <taxon>Pseudomonadati</taxon>
        <taxon>Pseudomonadota</taxon>
        <taxon>Gammaproteobacteria</taxon>
        <taxon>Enterobacterales</taxon>
        <taxon>Enterobacteriaceae</taxon>
        <taxon>Escherichia</taxon>
    </lineage>
</organism>
<feature type="initiator methionine" description="Removed" evidence="1">
    <location>
        <position position="1"/>
    </location>
</feature>
<feature type="chain" id="PRO_0000192379" description="Shikimate kinase 1">
    <location>
        <begin position="2"/>
        <end position="173"/>
    </location>
</feature>
<feature type="binding site" evidence="2">
    <location>
        <begin position="14"/>
        <end position="19"/>
    </location>
    <ligand>
        <name>ATP</name>
        <dbReference type="ChEBI" id="CHEBI:30616"/>
    </ligand>
</feature>
<feature type="binding site" evidence="2">
    <location>
        <position position="18"/>
    </location>
    <ligand>
        <name>Mg(2+)</name>
        <dbReference type="ChEBI" id="CHEBI:18420"/>
    </ligand>
</feature>
<feature type="binding site" evidence="2">
    <location>
        <position position="36"/>
    </location>
    <ligand>
        <name>substrate</name>
    </ligand>
</feature>
<feature type="binding site" evidence="2">
    <location>
        <position position="60"/>
    </location>
    <ligand>
        <name>substrate</name>
    </ligand>
</feature>
<feature type="binding site" evidence="2">
    <location>
        <position position="82"/>
    </location>
    <ligand>
        <name>substrate</name>
    </ligand>
</feature>
<feature type="binding site" evidence="2">
    <location>
        <position position="120"/>
    </location>
    <ligand>
        <name>ATP</name>
        <dbReference type="ChEBI" id="CHEBI:30616"/>
    </ligand>
</feature>
<feature type="binding site" evidence="2">
    <location>
        <position position="140"/>
    </location>
    <ligand>
        <name>substrate</name>
    </ligand>
</feature>
<feature type="binding site" evidence="2">
    <location>
        <position position="157"/>
    </location>
    <ligand>
        <name>ATP</name>
        <dbReference type="ChEBI" id="CHEBI:30616"/>
    </ligand>
</feature>
<comment type="function">
    <text evidence="2">Catalyzes the specific phosphorylation of the 3-hydroxyl group of shikimic acid using ATP as a cosubstrate.</text>
</comment>
<comment type="catalytic activity">
    <reaction evidence="2">
        <text>shikimate + ATP = 3-phosphoshikimate + ADP + H(+)</text>
        <dbReference type="Rhea" id="RHEA:13121"/>
        <dbReference type="ChEBI" id="CHEBI:15378"/>
        <dbReference type="ChEBI" id="CHEBI:30616"/>
        <dbReference type="ChEBI" id="CHEBI:36208"/>
        <dbReference type="ChEBI" id="CHEBI:145989"/>
        <dbReference type="ChEBI" id="CHEBI:456216"/>
        <dbReference type="EC" id="2.7.1.71"/>
    </reaction>
</comment>
<comment type="cofactor">
    <cofactor evidence="2">
        <name>Mg(2+)</name>
        <dbReference type="ChEBI" id="CHEBI:18420"/>
    </cofactor>
    <text evidence="2">Binds 1 Mg(2+) ion per subunit.</text>
</comment>
<comment type="pathway">
    <text evidence="2">Metabolic intermediate biosynthesis; chorismate biosynthesis; chorismate from D-erythrose 4-phosphate and phosphoenolpyruvate: step 5/7.</text>
</comment>
<comment type="subunit">
    <text evidence="2">Monomer.</text>
</comment>
<comment type="subcellular location">
    <subcellularLocation>
        <location evidence="2">Cytoplasm</location>
    </subcellularLocation>
</comment>
<comment type="similarity">
    <text evidence="2">Belongs to the shikimate kinase family.</text>
</comment>
<comment type="sequence caution" evidence="3">
    <conflict type="erroneous initiation">
        <sequence resource="EMBL-CDS" id="AAG58490"/>
    </conflict>
</comment>
<comment type="sequence caution" evidence="3">
    <conflict type="erroneous initiation">
        <sequence resource="EMBL-CDS" id="BAB37655"/>
    </conflict>
</comment>